<keyword id="KW-0963">Cytoplasm</keyword>
<keyword id="KW-0238">DNA-binding</keyword>
<feature type="chain" id="PRO_1000003753" description="Nucleoid-associated protein HPAG1_0033">
    <location>
        <begin position="1"/>
        <end position="97"/>
    </location>
</feature>
<protein>
    <recommendedName>
        <fullName evidence="1">Nucleoid-associated protein HPAG1_0033</fullName>
    </recommendedName>
</protein>
<gene>
    <name type="ordered locus">HPAG1_0033</name>
</gene>
<accession>Q1CVC2</accession>
<organism>
    <name type="scientific">Helicobacter pylori (strain HPAG1)</name>
    <dbReference type="NCBI Taxonomy" id="357544"/>
    <lineage>
        <taxon>Bacteria</taxon>
        <taxon>Pseudomonadati</taxon>
        <taxon>Campylobacterota</taxon>
        <taxon>Epsilonproteobacteria</taxon>
        <taxon>Campylobacterales</taxon>
        <taxon>Helicobacteraceae</taxon>
        <taxon>Helicobacter</taxon>
    </lineage>
</organism>
<reference key="1">
    <citation type="journal article" date="2006" name="Proc. Natl. Acad. Sci. U.S.A.">
        <title>The complete genome sequence of a chronic atrophic gastritis Helicobacter pylori strain: evolution during disease progression.</title>
        <authorList>
            <person name="Oh J.D."/>
            <person name="Kling-Baeckhed H."/>
            <person name="Giannakis M."/>
            <person name="Xu J."/>
            <person name="Fulton R.S."/>
            <person name="Fulton L.A."/>
            <person name="Cordum H.S."/>
            <person name="Wang C."/>
            <person name="Elliott G."/>
            <person name="Edwards J."/>
            <person name="Mardis E.R."/>
            <person name="Engstrand L.G."/>
            <person name="Gordon J.I."/>
        </authorList>
    </citation>
    <scope>NUCLEOTIDE SEQUENCE [LARGE SCALE GENOMIC DNA]</scope>
    <source>
        <strain>HPAG1</strain>
    </source>
</reference>
<evidence type="ECO:0000255" key="1">
    <source>
        <dbReference type="HAMAP-Rule" id="MF_00274"/>
    </source>
</evidence>
<dbReference type="EMBL" id="CP000241">
    <property type="protein sequence ID" value="ABF84100.1"/>
    <property type="molecule type" value="Genomic_DNA"/>
</dbReference>
<dbReference type="RefSeq" id="WP_000347917.1">
    <property type="nucleotide sequence ID" value="NC_008086.1"/>
</dbReference>
<dbReference type="SMR" id="Q1CVC2"/>
<dbReference type="KEGG" id="hpa:HPAG1_0033"/>
<dbReference type="HOGENOM" id="CLU_140930_2_1_7"/>
<dbReference type="GO" id="GO:0043590">
    <property type="term" value="C:bacterial nucleoid"/>
    <property type="evidence" value="ECO:0007669"/>
    <property type="project" value="UniProtKB-UniRule"/>
</dbReference>
<dbReference type="GO" id="GO:0005737">
    <property type="term" value="C:cytoplasm"/>
    <property type="evidence" value="ECO:0007669"/>
    <property type="project" value="UniProtKB-UniRule"/>
</dbReference>
<dbReference type="GO" id="GO:0003677">
    <property type="term" value="F:DNA binding"/>
    <property type="evidence" value="ECO:0007669"/>
    <property type="project" value="UniProtKB-UniRule"/>
</dbReference>
<dbReference type="Gene3D" id="3.30.1310.10">
    <property type="entry name" value="Nucleoid-associated protein YbaB-like domain"/>
    <property type="match status" value="1"/>
</dbReference>
<dbReference type="HAMAP" id="MF_00274">
    <property type="entry name" value="DNA_YbaB_EbfC"/>
    <property type="match status" value="1"/>
</dbReference>
<dbReference type="InterPro" id="IPR036894">
    <property type="entry name" value="YbaB-like_sf"/>
</dbReference>
<dbReference type="InterPro" id="IPR004401">
    <property type="entry name" value="YbaB/EbfC"/>
</dbReference>
<dbReference type="NCBIfam" id="TIGR00103">
    <property type="entry name" value="DNA_YbaB_EbfC"/>
    <property type="match status" value="1"/>
</dbReference>
<dbReference type="Pfam" id="PF02575">
    <property type="entry name" value="YbaB_DNA_bd"/>
    <property type="match status" value="1"/>
</dbReference>
<dbReference type="PIRSF" id="PIRSF004555">
    <property type="entry name" value="UCP004555"/>
    <property type="match status" value="1"/>
</dbReference>
<dbReference type="SUPFAM" id="SSF82607">
    <property type="entry name" value="YbaB-like"/>
    <property type="match status" value="1"/>
</dbReference>
<proteinExistence type="inferred from homology"/>
<sequence>MDFSQLGGLLDGMKKEFSQLEEKNKDTIHTSKSGGGMVSVSFNGVGELVDLQIDDSLLEDKEAMQIYLMSALNDGYKAVEENRKNLAFNMLGNFAKL</sequence>
<name>Y033_HELPH</name>
<comment type="function">
    <text evidence="1">Binds to DNA and alters its conformation. May be involved in regulation of gene expression, nucleoid organization and DNA protection.</text>
</comment>
<comment type="subunit">
    <text evidence="1">Homodimer.</text>
</comment>
<comment type="subcellular location">
    <subcellularLocation>
        <location evidence="1">Cytoplasm</location>
        <location evidence="1">Nucleoid</location>
    </subcellularLocation>
</comment>
<comment type="similarity">
    <text evidence="1">Belongs to the YbaB/EbfC family.</text>
</comment>